<proteinExistence type="inferred from homology"/>
<protein>
    <recommendedName>
        <fullName>Probable GTP-binding protein OBGC1, chloroplastic</fullName>
    </recommendedName>
</protein>
<gene>
    <name type="primary">OBGC1</name>
    <name type="ORF">OsI_27269</name>
</gene>
<organism>
    <name type="scientific">Oryza sativa subsp. indica</name>
    <name type="common">Rice</name>
    <dbReference type="NCBI Taxonomy" id="39946"/>
    <lineage>
        <taxon>Eukaryota</taxon>
        <taxon>Viridiplantae</taxon>
        <taxon>Streptophyta</taxon>
        <taxon>Embryophyta</taxon>
        <taxon>Tracheophyta</taxon>
        <taxon>Spermatophyta</taxon>
        <taxon>Magnoliopsida</taxon>
        <taxon>Liliopsida</taxon>
        <taxon>Poales</taxon>
        <taxon>Poaceae</taxon>
        <taxon>BOP clade</taxon>
        <taxon>Oryzoideae</taxon>
        <taxon>Oryzeae</taxon>
        <taxon>Oryzinae</taxon>
        <taxon>Oryza</taxon>
        <taxon>Oryza sativa</taxon>
    </lineage>
</organism>
<feature type="transit peptide" description="Chloroplast" evidence="2">
    <location>
        <begin position="1"/>
        <end position="90"/>
    </location>
</feature>
<feature type="chain" id="PRO_0000424829" description="Probable GTP-binding protein OBGC1, chloroplastic">
    <location>
        <begin position="91"/>
        <end position="752"/>
    </location>
</feature>
<feature type="domain" description="Obg" evidence="4">
    <location>
        <begin position="294"/>
        <end position="452"/>
    </location>
</feature>
<feature type="domain" description="OBG-type G">
    <location>
        <begin position="453"/>
        <end position="621"/>
    </location>
</feature>
<feature type="domain" description="OCT" evidence="3">
    <location>
        <begin position="649"/>
        <end position="728"/>
    </location>
</feature>
<feature type="region of interest" description="Disordered" evidence="5">
    <location>
        <begin position="19"/>
        <end position="121"/>
    </location>
</feature>
<feature type="region of interest" description="Disordered" evidence="5">
    <location>
        <begin position="728"/>
        <end position="752"/>
    </location>
</feature>
<feature type="compositionally biased region" description="Basic residues" evidence="5">
    <location>
        <begin position="26"/>
        <end position="36"/>
    </location>
</feature>
<feature type="compositionally biased region" description="Acidic residues" evidence="5">
    <location>
        <begin position="103"/>
        <end position="117"/>
    </location>
</feature>
<feature type="compositionally biased region" description="Basic and acidic residues" evidence="5">
    <location>
        <begin position="740"/>
        <end position="752"/>
    </location>
</feature>
<feature type="binding site" evidence="1">
    <location>
        <begin position="459"/>
        <end position="466"/>
    </location>
    <ligand>
        <name>GTP</name>
        <dbReference type="ChEBI" id="CHEBI:37565"/>
    </ligand>
</feature>
<feature type="binding site" evidence="1">
    <location>
        <position position="466"/>
    </location>
    <ligand>
        <name>Mg(2+)</name>
        <dbReference type="ChEBI" id="CHEBI:18420"/>
    </ligand>
</feature>
<feature type="binding site" evidence="1">
    <location>
        <begin position="484"/>
        <end position="488"/>
    </location>
    <ligand>
        <name>GTP</name>
        <dbReference type="ChEBI" id="CHEBI:37565"/>
    </ligand>
</feature>
<feature type="binding site" evidence="1">
    <location>
        <position position="486"/>
    </location>
    <ligand>
        <name>Mg(2+)</name>
        <dbReference type="ChEBI" id="CHEBI:18420"/>
    </ligand>
</feature>
<feature type="binding site" evidence="1">
    <location>
        <begin position="506"/>
        <end position="509"/>
    </location>
    <ligand>
        <name>GTP</name>
        <dbReference type="ChEBI" id="CHEBI:37565"/>
    </ligand>
</feature>
<feature type="binding site" evidence="1">
    <location>
        <begin position="573"/>
        <end position="576"/>
    </location>
    <ligand>
        <name>GTP</name>
        <dbReference type="ChEBI" id="CHEBI:37565"/>
    </ligand>
</feature>
<feature type="binding site" evidence="1">
    <location>
        <begin position="602"/>
        <end position="604"/>
    </location>
    <ligand>
        <name>GTP</name>
        <dbReference type="ChEBI" id="CHEBI:37565"/>
    </ligand>
</feature>
<reference key="1">
    <citation type="journal article" date="2005" name="PLoS Biol.">
        <title>The genomes of Oryza sativa: a history of duplications.</title>
        <authorList>
            <person name="Yu J."/>
            <person name="Wang J."/>
            <person name="Lin W."/>
            <person name="Li S."/>
            <person name="Li H."/>
            <person name="Zhou J."/>
            <person name="Ni P."/>
            <person name="Dong W."/>
            <person name="Hu S."/>
            <person name="Zeng C."/>
            <person name="Zhang J."/>
            <person name="Zhang Y."/>
            <person name="Li R."/>
            <person name="Xu Z."/>
            <person name="Li S."/>
            <person name="Li X."/>
            <person name="Zheng H."/>
            <person name="Cong L."/>
            <person name="Lin L."/>
            <person name="Yin J."/>
            <person name="Geng J."/>
            <person name="Li G."/>
            <person name="Shi J."/>
            <person name="Liu J."/>
            <person name="Lv H."/>
            <person name="Li J."/>
            <person name="Wang J."/>
            <person name="Deng Y."/>
            <person name="Ran L."/>
            <person name="Shi X."/>
            <person name="Wang X."/>
            <person name="Wu Q."/>
            <person name="Li C."/>
            <person name="Ren X."/>
            <person name="Wang J."/>
            <person name="Wang X."/>
            <person name="Li D."/>
            <person name="Liu D."/>
            <person name="Zhang X."/>
            <person name="Ji Z."/>
            <person name="Zhao W."/>
            <person name="Sun Y."/>
            <person name="Zhang Z."/>
            <person name="Bao J."/>
            <person name="Han Y."/>
            <person name="Dong L."/>
            <person name="Ji J."/>
            <person name="Chen P."/>
            <person name="Wu S."/>
            <person name="Liu J."/>
            <person name="Xiao Y."/>
            <person name="Bu D."/>
            <person name="Tan J."/>
            <person name="Yang L."/>
            <person name="Ye C."/>
            <person name="Zhang J."/>
            <person name="Xu J."/>
            <person name="Zhou Y."/>
            <person name="Yu Y."/>
            <person name="Zhang B."/>
            <person name="Zhuang S."/>
            <person name="Wei H."/>
            <person name="Liu B."/>
            <person name="Lei M."/>
            <person name="Yu H."/>
            <person name="Li Y."/>
            <person name="Xu H."/>
            <person name="Wei S."/>
            <person name="He X."/>
            <person name="Fang L."/>
            <person name="Zhang Z."/>
            <person name="Zhang Y."/>
            <person name="Huang X."/>
            <person name="Su Z."/>
            <person name="Tong W."/>
            <person name="Li J."/>
            <person name="Tong Z."/>
            <person name="Li S."/>
            <person name="Ye J."/>
            <person name="Wang L."/>
            <person name="Fang L."/>
            <person name="Lei T."/>
            <person name="Chen C.-S."/>
            <person name="Chen H.-C."/>
            <person name="Xu Z."/>
            <person name="Li H."/>
            <person name="Huang H."/>
            <person name="Zhang F."/>
            <person name="Xu H."/>
            <person name="Li N."/>
            <person name="Zhao C."/>
            <person name="Li S."/>
            <person name="Dong L."/>
            <person name="Huang Y."/>
            <person name="Li L."/>
            <person name="Xi Y."/>
            <person name="Qi Q."/>
            <person name="Li W."/>
            <person name="Zhang B."/>
            <person name="Hu W."/>
            <person name="Zhang Y."/>
            <person name="Tian X."/>
            <person name="Jiao Y."/>
            <person name="Liang X."/>
            <person name="Jin J."/>
            <person name="Gao L."/>
            <person name="Zheng W."/>
            <person name="Hao B."/>
            <person name="Liu S.-M."/>
            <person name="Wang W."/>
            <person name="Yuan L."/>
            <person name="Cao M."/>
            <person name="McDermott J."/>
            <person name="Samudrala R."/>
            <person name="Wang J."/>
            <person name="Wong G.K.-S."/>
            <person name="Yang H."/>
        </authorList>
    </citation>
    <scope>NUCLEOTIDE SEQUENCE [LARGE SCALE GENOMIC DNA]</scope>
    <source>
        <strain>cv. 93-11</strain>
    </source>
</reference>
<dbReference type="EMBL" id="CM000132">
    <property type="protein sequence ID" value="EAZ05079.1"/>
    <property type="molecule type" value="Genomic_DNA"/>
</dbReference>
<dbReference type="SMR" id="A2YPR8"/>
<dbReference type="STRING" id="39946.A2YPR8"/>
<dbReference type="EnsemblPlants" id="BGIOSGA026355-TA">
    <property type="protein sequence ID" value="BGIOSGA026355-PA"/>
    <property type="gene ID" value="BGIOSGA026355"/>
</dbReference>
<dbReference type="EnsemblPlants" id="OsGoSa_07g0026880.01">
    <property type="protein sequence ID" value="OsGoSa_07g0026880.01"/>
    <property type="gene ID" value="OsGoSa_07g0026880"/>
</dbReference>
<dbReference type="EnsemblPlants" id="OsIR64_07g0027460.01">
    <property type="protein sequence ID" value="OsIR64_07g0027460.01"/>
    <property type="gene ID" value="OsIR64_07g0027460"/>
</dbReference>
<dbReference type="EnsemblPlants" id="OsKYG_07g0027180.01">
    <property type="protein sequence ID" value="OsKYG_07g0027180.01"/>
    <property type="gene ID" value="OsKYG_07g0027180"/>
</dbReference>
<dbReference type="EnsemblPlants" id="OsLaMu_07g0026760.01">
    <property type="protein sequence ID" value="OsLaMu_07g0026760.01"/>
    <property type="gene ID" value="OsLaMu_07g0026760"/>
</dbReference>
<dbReference type="EnsemblPlants" id="OsLima_07g0026740.01">
    <property type="protein sequence ID" value="OsLima_07g0026740.01"/>
    <property type="gene ID" value="OsLima_07g0026740"/>
</dbReference>
<dbReference type="EnsemblPlants" id="OsLiXu_07g0027220.01">
    <property type="protein sequence ID" value="OsLiXu_07g0027220.01"/>
    <property type="gene ID" value="OsLiXu_07g0027220"/>
</dbReference>
<dbReference type="EnsemblPlants" id="OsMH63_07G026810_01">
    <property type="protein sequence ID" value="OsMH63_07G026810_01"/>
    <property type="gene ID" value="OsMH63_07G026810"/>
</dbReference>
<dbReference type="EnsemblPlants" id="OsPr106_07g0026960.01">
    <property type="protein sequence ID" value="OsPr106_07g0026960.01"/>
    <property type="gene ID" value="OsPr106_07g0026960"/>
</dbReference>
<dbReference type="EnsemblPlants" id="OsZS97_07G026550_01">
    <property type="protein sequence ID" value="OsZS97_07G026550_01"/>
    <property type="gene ID" value="OsZS97_07G026550"/>
</dbReference>
<dbReference type="Gramene" id="BGIOSGA026355-TA">
    <property type="protein sequence ID" value="BGIOSGA026355-PA"/>
    <property type="gene ID" value="BGIOSGA026355"/>
</dbReference>
<dbReference type="Gramene" id="OsGoSa_07g0026880.01">
    <property type="protein sequence ID" value="OsGoSa_07g0026880.01"/>
    <property type="gene ID" value="OsGoSa_07g0026880"/>
</dbReference>
<dbReference type="Gramene" id="OsIR64_07g0027460.01">
    <property type="protein sequence ID" value="OsIR64_07g0027460.01"/>
    <property type="gene ID" value="OsIR64_07g0027460"/>
</dbReference>
<dbReference type="Gramene" id="OsKYG_07g0027180.01">
    <property type="protein sequence ID" value="OsKYG_07g0027180.01"/>
    <property type="gene ID" value="OsKYG_07g0027180"/>
</dbReference>
<dbReference type="Gramene" id="OsLaMu_07g0026760.01">
    <property type="protein sequence ID" value="OsLaMu_07g0026760.01"/>
    <property type="gene ID" value="OsLaMu_07g0026760"/>
</dbReference>
<dbReference type="Gramene" id="OsLima_07g0026740.01">
    <property type="protein sequence ID" value="OsLima_07g0026740.01"/>
    <property type="gene ID" value="OsLima_07g0026740"/>
</dbReference>
<dbReference type="Gramene" id="OsLiXu_07g0027220.01">
    <property type="protein sequence ID" value="OsLiXu_07g0027220.01"/>
    <property type="gene ID" value="OsLiXu_07g0027220"/>
</dbReference>
<dbReference type="Gramene" id="OsMH63_07G026810_01">
    <property type="protein sequence ID" value="OsMH63_07G026810_01"/>
    <property type="gene ID" value="OsMH63_07G026810"/>
</dbReference>
<dbReference type="Gramene" id="OsPr106_07g0026960.01">
    <property type="protein sequence ID" value="OsPr106_07g0026960.01"/>
    <property type="gene ID" value="OsPr106_07g0026960"/>
</dbReference>
<dbReference type="Gramene" id="OsZS97_07G026550_01">
    <property type="protein sequence ID" value="OsZS97_07G026550_01"/>
    <property type="gene ID" value="OsZS97_07G026550"/>
</dbReference>
<dbReference type="HOGENOM" id="CLU_011747_4_0_1"/>
<dbReference type="OMA" id="LTIGQFD"/>
<dbReference type="OrthoDB" id="347018at2759"/>
<dbReference type="Proteomes" id="UP000007015">
    <property type="component" value="Chromosome 7"/>
</dbReference>
<dbReference type="GO" id="GO:0009706">
    <property type="term" value="C:chloroplast inner membrane"/>
    <property type="evidence" value="ECO:0007669"/>
    <property type="project" value="EnsemblPlants"/>
</dbReference>
<dbReference type="GO" id="GO:0009570">
    <property type="term" value="C:chloroplast stroma"/>
    <property type="evidence" value="ECO:0007669"/>
    <property type="project" value="EnsemblPlants"/>
</dbReference>
<dbReference type="GO" id="GO:0005739">
    <property type="term" value="C:mitochondrion"/>
    <property type="evidence" value="ECO:0007669"/>
    <property type="project" value="TreeGrafter"/>
</dbReference>
<dbReference type="GO" id="GO:0005525">
    <property type="term" value="F:GTP binding"/>
    <property type="evidence" value="ECO:0007669"/>
    <property type="project" value="UniProtKB-KW"/>
</dbReference>
<dbReference type="GO" id="GO:0003924">
    <property type="term" value="F:GTPase activity"/>
    <property type="evidence" value="ECO:0007669"/>
    <property type="project" value="EnsemblPlants"/>
</dbReference>
<dbReference type="GO" id="GO:0000287">
    <property type="term" value="F:magnesium ion binding"/>
    <property type="evidence" value="ECO:0007669"/>
    <property type="project" value="InterPro"/>
</dbReference>
<dbReference type="GO" id="GO:0003729">
    <property type="term" value="F:mRNA binding"/>
    <property type="evidence" value="ECO:0007669"/>
    <property type="project" value="EnsemblPlants"/>
</dbReference>
<dbReference type="GO" id="GO:0009658">
    <property type="term" value="P:chloroplast organization"/>
    <property type="evidence" value="ECO:0007669"/>
    <property type="project" value="EnsemblPlants"/>
</dbReference>
<dbReference type="GO" id="GO:0009793">
    <property type="term" value="P:embryo development ending in seed dormancy"/>
    <property type="evidence" value="ECO:0007669"/>
    <property type="project" value="EnsemblPlants"/>
</dbReference>
<dbReference type="GO" id="GO:0009416">
    <property type="term" value="P:response to light stimulus"/>
    <property type="evidence" value="ECO:0007669"/>
    <property type="project" value="EnsemblPlants"/>
</dbReference>
<dbReference type="GO" id="GO:0006364">
    <property type="term" value="P:rRNA processing"/>
    <property type="evidence" value="ECO:0007669"/>
    <property type="project" value="EnsemblPlants"/>
</dbReference>
<dbReference type="GO" id="GO:0010027">
    <property type="term" value="P:thylakoid membrane organization"/>
    <property type="evidence" value="ECO:0007669"/>
    <property type="project" value="EnsemblPlants"/>
</dbReference>
<dbReference type="CDD" id="cd01898">
    <property type="entry name" value="Obg"/>
    <property type="match status" value="1"/>
</dbReference>
<dbReference type="FunFam" id="2.70.210.12:FF:000001">
    <property type="entry name" value="GTPase Obg"/>
    <property type="match status" value="1"/>
</dbReference>
<dbReference type="FunFam" id="3.40.50.300:FF:000515">
    <property type="entry name" value="GTPase Obg"/>
    <property type="match status" value="1"/>
</dbReference>
<dbReference type="FunFam" id="3.30.300.350:FF:000003">
    <property type="entry name" value="Probable GTP-binding protein OBGC1, chloroplastic"/>
    <property type="match status" value="1"/>
</dbReference>
<dbReference type="Gene3D" id="3.30.300.350">
    <property type="entry name" value="GTP-binding protein OBG, C-terminal domain"/>
    <property type="match status" value="1"/>
</dbReference>
<dbReference type="Gene3D" id="2.70.210.12">
    <property type="entry name" value="GTP1/OBG domain"/>
    <property type="match status" value="1"/>
</dbReference>
<dbReference type="Gene3D" id="3.40.50.300">
    <property type="entry name" value="P-loop containing nucleotide triphosphate hydrolases"/>
    <property type="match status" value="1"/>
</dbReference>
<dbReference type="HAMAP" id="MF_01454">
    <property type="entry name" value="GTPase_Obg"/>
    <property type="match status" value="1"/>
</dbReference>
<dbReference type="InterPro" id="IPR031167">
    <property type="entry name" value="G_OBG"/>
</dbReference>
<dbReference type="InterPro" id="IPR006073">
    <property type="entry name" value="GTP-bd"/>
</dbReference>
<dbReference type="InterPro" id="IPR014100">
    <property type="entry name" value="GTP-bd_Obg/CgtA"/>
</dbReference>
<dbReference type="InterPro" id="IPR036346">
    <property type="entry name" value="GTP-bd_prot_GTP1/OBG_C_sf"/>
</dbReference>
<dbReference type="InterPro" id="IPR006074">
    <property type="entry name" value="GTP1-OBG_CS"/>
</dbReference>
<dbReference type="InterPro" id="IPR006169">
    <property type="entry name" value="GTP1_OBG_dom"/>
</dbReference>
<dbReference type="InterPro" id="IPR036726">
    <property type="entry name" value="GTP1_OBG_dom_sf"/>
</dbReference>
<dbReference type="InterPro" id="IPR045086">
    <property type="entry name" value="OBG_GTPase"/>
</dbReference>
<dbReference type="InterPro" id="IPR015349">
    <property type="entry name" value="OCT_dom"/>
</dbReference>
<dbReference type="InterPro" id="IPR027417">
    <property type="entry name" value="P-loop_NTPase"/>
</dbReference>
<dbReference type="NCBIfam" id="TIGR02729">
    <property type="entry name" value="Obg_CgtA"/>
    <property type="match status" value="1"/>
</dbReference>
<dbReference type="NCBIfam" id="TIGR03595">
    <property type="entry name" value="Obg_CgtA_exten"/>
    <property type="match status" value="1"/>
</dbReference>
<dbReference type="NCBIfam" id="NF008954">
    <property type="entry name" value="PRK12296.1"/>
    <property type="match status" value="1"/>
</dbReference>
<dbReference type="NCBIfam" id="NF008955">
    <property type="entry name" value="PRK12297.1"/>
    <property type="match status" value="1"/>
</dbReference>
<dbReference type="NCBIfam" id="NF008956">
    <property type="entry name" value="PRK12299.1"/>
    <property type="match status" value="1"/>
</dbReference>
<dbReference type="PANTHER" id="PTHR11702">
    <property type="entry name" value="DEVELOPMENTALLY REGULATED GTP-BINDING PROTEIN-RELATED"/>
    <property type="match status" value="1"/>
</dbReference>
<dbReference type="PANTHER" id="PTHR11702:SF44">
    <property type="entry name" value="GTP-BINDING PROTEIN OBGC, CHLOROPLASTIC"/>
    <property type="match status" value="1"/>
</dbReference>
<dbReference type="Pfam" id="PF09269">
    <property type="entry name" value="DUF1967"/>
    <property type="match status" value="1"/>
</dbReference>
<dbReference type="Pfam" id="PF01018">
    <property type="entry name" value="GTP1_OBG"/>
    <property type="match status" value="1"/>
</dbReference>
<dbReference type="Pfam" id="PF01926">
    <property type="entry name" value="MMR_HSR1"/>
    <property type="match status" value="1"/>
</dbReference>
<dbReference type="PRINTS" id="PR00326">
    <property type="entry name" value="GTP1OBG"/>
</dbReference>
<dbReference type="SUPFAM" id="SSF102741">
    <property type="entry name" value="Obg GTP-binding protein C-terminal domain"/>
    <property type="match status" value="1"/>
</dbReference>
<dbReference type="SUPFAM" id="SSF82051">
    <property type="entry name" value="Obg GTP-binding protein N-terminal domain"/>
    <property type="match status" value="1"/>
</dbReference>
<dbReference type="SUPFAM" id="SSF52540">
    <property type="entry name" value="P-loop containing nucleoside triphosphate hydrolases"/>
    <property type="match status" value="1"/>
</dbReference>
<dbReference type="PROSITE" id="PS51710">
    <property type="entry name" value="G_OBG"/>
    <property type="match status" value="1"/>
</dbReference>
<dbReference type="PROSITE" id="PS00905">
    <property type="entry name" value="GTP1_OBG"/>
    <property type="match status" value="1"/>
</dbReference>
<dbReference type="PROSITE" id="PS51883">
    <property type="entry name" value="OBG"/>
    <property type="match status" value="1"/>
</dbReference>
<dbReference type="PROSITE" id="PS51881">
    <property type="entry name" value="OCT"/>
    <property type="match status" value="1"/>
</dbReference>
<sequence>MAPAVAVVAAAAAFPFRLFSAEARRNTKGSRSKRGSARPLKPSPPPRPSASSSAAGGGGATTFTRLPLRNAPASVEVTLDRFPTANPEPRASTFTRRNGERLGDDEEDEEEEEDEVELGLRGATTFARLPLRDSPDGGDLTIGHFDAGVAPQEGLRSRAISRQLVEHLDDVEEEEEEQVVSRLDIFEGAKGREARAFLPDEDDEDDDVVVFDPEYDGYSDDEEFVATAVEQSPRGDAIAVAELEKLKYDNDDDDDDDDEVVVFHPDDDEEVDVFEDYDDDEEEETKEKGVPAVMRCFDTAKIYAKAGDGGNGVVAFRREKYVPLGGPSGGDGGRGGNVFVEVDGDMNSLLPFRKSVHFRAGRGAHGQGRQQAGAKGDDVVVKVPPGTVVRSAAGDVELLELMRPGQRALLLPGGRGGRGNAAFKSGTNKAPRIAEKGEKGPEMWIDLELKLVADVGIVGAPNAGKSTLLTAISAAKPTIANYPFTTLLPNLGVVSLDFDATMVVADLPGLLEGAHRGYGLGHEFLRHSERCSVLVHVVDGSGEQPEYEFEAVRLELELFSPSLVDKPYIVVYNKMDLPEASERWNKFQEKLQAEGIEPYCISAMNRQGTEDVVLAAYKVLQKDRQRMKDDEEWNGPENLNHVADAIKRERRAPMNEFEIFHDKGTNTWNVVGAGIERFVQMTNWQYSESLKRFQHALEACGVNKTLIKRGVKEGDTVVVGEMEMVWTDEPSKTRSSKTMNSKDDSVRWPEFG</sequence>
<keyword id="KW-0150">Chloroplast</keyword>
<keyword id="KW-0342">GTP-binding</keyword>
<keyword id="KW-0460">Magnesium</keyword>
<keyword id="KW-0479">Metal-binding</keyword>
<keyword id="KW-0547">Nucleotide-binding</keyword>
<keyword id="KW-0934">Plastid</keyword>
<keyword id="KW-1185">Reference proteome</keyword>
<keyword id="KW-0809">Transit peptide</keyword>
<accession>A2YPR8</accession>
<evidence type="ECO:0000250" key="1"/>
<evidence type="ECO:0000255" key="2"/>
<evidence type="ECO:0000255" key="3">
    <source>
        <dbReference type="PROSITE-ProRule" id="PRU01229"/>
    </source>
</evidence>
<evidence type="ECO:0000255" key="4">
    <source>
        <dbReference type="PROSITE-ProRule" id="PRU01231"/>
    </source>
</evidence>
<evidence type="ECO:0000256" key="5">
    <source>
        <dbReference type="SAM" id="MobiDB-lite"/>
    </source>
</evidence>
<evidence type="ECO:0000305" key="6"/>
<name>OBGC1_ORYSI</name>
<comment type="function">
    <text evidence="1">Probable GTP-binding protein that may play a role in chloroplast development.</text>
</comment>
<comment type="cofactor">
    <cofactor evidence="1">
        <name>Mg(2+)</name>
        <dbReference type="ChEBI" id="CHEBI:18420"/>
    </cofactor>
</comment>
<comment type="subcellular location">
    <subcellularLocation>
        <location evidence="6">Plastid</location>
        <location evidence="6">Chloroplast</location>
    </subcellularLocation>
</comment>
<comment type="similarity">
    <text evidence="6">Belongs to the TRAFAC class OBG-HflX-like GTPase superfamily. OBG GTPase family.</text>
</comment>